<protein>
    <recommendedName>
        <fullName evidence="1">Glutamyl-tRNA reductase</fullName>
        <shortName evidence="1">GluTR</shortName>
        <ecNumber evidence="1">1.2.1.70</ecNumber>
    </recommendedName>
</protein>
<accession>B7MKB2</accession>
<organism>
    <name type="scientific">Escherichia coli O45:K1 (strain S88 / ExPEC)</name>
    <dbReference type="NCBI Taxonomy" id="585035"/>
    <lineage>
        <taxon>Bacteria</taxon>
        <taxon>Pseudomonadati</taxon>
        <taxon>Pseudomonadota</taxon>
        <taxon>Gammaproteobacteria</taxon>
        <taxon>Enterobacterales</taxon>
        <taxon>Enterobacteriaceae</taxon>
        <taxon>Escherichia</taxon>
    </lineage>
</organism>
<feature type="chain" id="PRO_1000190525" description="Glutamyl-tRNA reductase">
    <location>
        <begin position="1"/>
        <end position="418"/>
    </location>
</feature>
<feature type="active site" description="Nucleophile" evidence="1">
    <location>
        <position position="50"/>
    </location>
</feature>
<feature type="binding site" evidence="1">
    <location>
        <begin position="49"/>
        <end position="52"/>
    </location>
    <ligand>
        <name>substrate</name>
    </ligand>
</feature>
<feature type="binding site" evidence="1">
    <location>
        <position position="109"/>
    </location>
    <ligand>
        <name>substrate</name>
    </ligand>
</feature>
<feature type="binding site" evidence="1">
    <location>
        <begin position="114"/>
        <end position="116"/>
    </location>
    <ligand>
        <name>substrate</name>
    </ligand>
</feature>
<feature type="binding site" evidence="1">
    <location>
        <position position="120"/>
    </location>
    <ligand>
        <name>substrate</name>
    </ligand>
</feature>
<feature type="binding site" evidence="1">
    <location>
        <begin position="189"/>
        <end position="194"/>
    </location>
    <ligand>
        <name>NADP(+)</name>
        <dbReference type="ChEBI" id="CHEBI:58349"/>
    </ligand>
</feature>
<feature type="site" description="Important for activity" evidence="1">
    <location>
        <position position="99"/>
    </location>
</feature>
<reference key="1">
    <citation type="journal article" date="2009" name="PLoS Genet.">
        <title>Organised genome dynamics in the Escherichia coli species results in highly diverse adaptive paths.</title>
        <authorList>
            <person name="Touchon M."/>
            <person name="Hoede C."/>
            <person name="Tenaillon O."/>
            <person name="Barbe V."/>
            <person name="Baeriswyl S."/>
            <person name="Bidet P."/>
            <person name="Bingen E."/>
            <person name="Bonacorsi S."/>
            <person name="Bouchier C."/>
            <person name="Bouvet O."/>
            <person name="Calteau A."/>
            <person name="Chiapello H."/>
            <person name="Clermont O."/>
            <person name="Cruveiller S."/>
            <person name="Danchin A."/>
            <person name="Diard M."/>
            <person name="Dossat C."/>
            <person name="Karoui M.E."/>
            <person name="Frapy E."/>
            <person name="Garry L."/>
            <person name="Ghigo J.M."/>
            <person name="Gilles A.M."/>
            <person name="Johnson J."/>
            <person name="Le Bouguenec C."/>
            <person name="Lescat M."/>
            <person name="Mangenot S."/>
            <person name="Martinez-Jehanne V."/>
            <person name="Matic I."/>
            <person name="Nassif X."/>
            <person name="Oztas S."/>
            <person name="Petit M.A."/>
            <person name="Pichon C."/>
            <person name="Rouy Z."/>
            <person name="Ruf C.S."/>
            <person name="Schneider D."/>
            <person name="Tourret J."/>
            <person name="Vacherie B."/>
            <person name="Vallenet D."/>
            <person name="Medigue C."/>
            <person name="Rocha E.P.C."/>
            <person name="Denamur E."/>
        </authorList>
    </citation>
    <scope>NUCLEOTIDE SEQUENCE [LARGE SCALE GENOMIC DNA]</scope>
    <source>
        <strain>S88 / ExPEC</strain>
    </source>
</reference>
<evidence type="ECO:0000255" key="1">
    <source>
        <dbReference type="HAMAP-Rule" id="MF_00087"/>
    </source>
</evidence>
<gene>
    <name evidence="1" type="primary">hemA</name>
    <name type="ordered locus">ECS88_1278</name>
</gene>
<keyword id="KW-0521">NADP</keyword>
<keyword id="KW-0560">Oxidoreductase</keyword>
<keyword id="KW-0627">Porphyrin biosynthesis</keyword>
<keyword id="KW-1185">Reference proteome</keyword>
<comment type="function">
    <text evidence="1">Catalyzes the NADPH-dependent reduction of glutamyl-tRNA(Glu) to glutamate 1-semialdehyde (GSA).</text>
</comment>
<comment type="catalytic activity">
    <reaction evidence="1">
        <text>(S)-4-amino-5-oxopentanoate + tRNA(Glu) + NADP(+) = L-glutamyl-tRNA(Glu) + NADPH + H(+)</text>
        <dbReference type="Rhea" id="RHEA:12344"/>
        <dbReference type="Rhea" id="RHEA-COMP:9663"/>
        <dbReference type="Rhea" id="RHEA-COMP:9680"/>
        <dbReference type="ChEBI" id="CHEBI:15378"/>
        <dbReference type="ChEBI" id="CHEBI:57501"/>
        <dbReference type="ChEBI" id="CHEBI:57783"/>
        <dbReference type="ChEBI" id="CHEBI:58349"/>
        <dbReference type="ChEBI" id="CHEBI:78442"/>
        <dbReference type="ChEBI" id="CHEBI:78520"/>
        <dbReference type="EC" id="1.2.1.70"/>
    </reaction>
</comment>
<comment type="pathway">
    <text evidence="1">Porphyrin-containing compound metabolism; protoporphyrin-IX biosynthesis; 5-aminolevulinate from L-glutamyl-tRNA(Glu): step 1/2.</text>
</comment>
<comment type="subunit">
    <text evidence="1">Homodimer.</text>
</comment>
<comment type="domain">
    <text evidence="1">Possesses an unusual extended V-shaped dimeric structure with each monomer consisting of three distinct domains arranged along a curved 'spinal' alpha-helix. The N-terminal catalytic domain specifically recognizes the glutamate moiety of the substrate. The second domain is the NADPH-binding domain, and the third C-terminal domain is responsible for dimerization.</text>
</comment>
<comment type="miscellaneous">
    <text evidence="1">During catalysis, the active site Cys acts as a nucleophile attacking the alpha-carbonyl group of tRNA-bound glutamate with the formation of a thioester intermediate between enzyme and glutamate, and the concomitant release of tRNA(Glu). The thioester intermediate is finally reduced by direct hydride transfer from NADPH, to form the product GSA.</text>
</comment>
<comment type="similarity">
    <text evidence="1">Belongs to the glutamyl-tRNA reductase family.</text>
</comment>
<name>HEM1_ECO45</name>
<proteinExistence type="inferred from homology"/>
<dbReference type="EC" id="1.2.1.70" evidence="1"/>
<dbReference type="EMBL" id="CU928161">
    <property type="protein sequence ID" value="CAR02604.1"/>
    <property type="molecule type" value="Genomic_DNA"/>
</dbReference>
<dbReference type="RefSeq" id="WP_000173201.1">
    <property type="nucleotide sequence ID" value="NC_011742.1"/>
</dbReference>
<dbReference type="SMR" id="B7MKB2"/>
<dbReference type="KEGG" id="ecz:ECS88_1278"/>
<dbReference type="HOGENOM" id="CLU_035113_2_2_6"/>
<dbReference type="UniPathway" id="UPA00251">
    <property type="reaction ID" value="UER00316"/>
</dbReference>
<dbReference type="Proteomes" id="UP000000747">
    <property type="component" value="Chromosome"/>
</dbReference>
<dbReference type="GO" id="GO:0008883">
    <property type="term" value="F:glutamyl-tRNA reductase activity"/>
    <property type="evidence" value="ECO:0007669"/>
    <property type="project" value="UniProtKB-UniRule"/>
</dbReference>
<dbReference type="GO" id="GO:0050661">
    <property type="term" value="F:NADP binding"/>
    <property type="evidence" value="ECO:0007669"/>
    <property type="project" value="InterPro"/>
</dbReference>
<dbReference type="GO" id="GO:0019353">
    <property type="term" value="P:protoporphyrinogen IX biosynthetic process from glutamate"/>
    <property type="evidence" value="ECO:0007669"/>
    <property type="project" value="TreeGrafter"/>
</dbReference>
<dbReference type="CDD" id="cd05213">
    <property type="entry name" value="NAD_bind_Glutamyl_tRNA_reduct"/>
    <property type="match status" value="1"/>
</dbReference>
<dbReference type="FunFam" id="3.30.460.30:FF:000001">
    <property type="entry name" value="Glutamyl-tRNA reductase"/>
    <property type="match status" value="1"/>
</dbReference>
<dbReference type="FunFam" id="3.40.50.720:FF:000031">
    <property type="entry name" value="Glutamyl-tRNA reductase"/>
    <property type="match status" value="1"/>
</dbReference>
<dbReference type="Gene3D" id="3.30.460.30">
    <property type="entry name" value="Glutamyl-tRNA reductase, N-terminal domain"/>
    <property type="match status" value="1"/>
</dbReference>
<dbReference type="Gene3D" id="3.40.50.720">
    <property type="entry name" value="NAD(P)-binding Rossmann-like Domain"/>
    <property type="match status" value="1"/>
</dbReference>
<dbReference type="HAMAP" id="MF_00087">
    <property type="entry name" value="Glu_tRNA_reductase"/>
    <property type="match status" value="1"/>
</dbReference>
<dbReference type="InterPro" id="IPR000343">
    <property type="entry name" value="4pyrrol_synth_GluRdtase"/>
</dbReference>
<dbReference type="InterPro" id="IPR015896">
    <property type="entry name" value="4pyrrol_synth_GluRdtase_dimer"/>
</dbReference>
<dbReference type="InterPro" id="IPR015895">
    <property type="entry name" value="4pyrrol_synth_GluRdtase_N"/>
</dbReference>
<dbReference type="InterPro" id="IPR018214">
    <property type="entry name" value="GluRdtase_CS"/>
</dbReference>
<dbReference type="InterPro" id="IPR036453">
    <property type="entry name" value="GluRdtase_dimer_dom_sf"/>
</dbReference>
<dbReference type="InterPro" id="IPR036343">
    <property type="entry name" value="GluRdtase_N_sf"/>
</dbReference>
<dbReference type="InterPro" id="IPR036291">
    <property type="entry name" value="NAD(P)-bd_dom_sf"/>
</dbReference>
<dbReference type="InterPro" id="IPR006151">
    <property type="entry name" value="Shikm_DH/Glu-tRNA_Rdtase"/>
</dbReference>
<dbReference type="NCBIfam" id="TIGR01035">
    <property type="entry name" value="hemA"/>
    <property type="match status" value="1"/>
</dbReference>
<dbReference type="PANTHER" id="PTHR43013">
    <property type="entry name" value="GLUTAMYL-TRNA REDUCTASE"/>
    <property type="match status" value="1"/>
</dbReference>
<dbReference type="PANTHER" id="PTHR43013:SF1">
    <property type="entry name" value="GLUTAMYL-TRNA REDUCTASE"/>
    <property type="match status" value="1"/>
</dbReference>
<dbReference type="Pfam" id="PF00745">
    <property type="entry name" value="GlutR_dimer"/>
    <property type="match status" value="1"/>
</dbReference>
<dbReference type="Pfam" id="PF05201">
    <property type="entry name" value="GlutR_N"/>
    <property type="match status" value="1"/>
</dbReference>
<dbReference type="Pfam" id="PF01488">
    <property type="entry name" value="Shikimate_DH"/>
    <property type="match status" value="1"/>
</dbReference>
<dbReference type="PIRSF" id="PIRSF000445">
    <property type="entry name" value="4pyrrol_synth_GluRdtase"/>
    <property type="match status" value="1"/>
</dbReference>
<dbReference type="SUPFAM" id="SSF69742">
    <property type="entry name" value="Glutamyl tRNA-reductase catalytic, N-terminal domain"/>
    <property type="match status" value="1"/>
</dbReference>
<dbReference type="SUPFAM" id="SSF69075">
    <property type="entry name" value="Glutamyl tRNA-reductase dimerization domain"/>
    <property type="match status" value="1"/>
</dbReference>
<dbReference type="SUPFAM" id="SSF51735">
    <property type="entry name" value="NAD(P)-binding Rossmann-fold domains"/>
    <property type="match status" value="1"/>
</dbReference>
<dbReference type="PROSITE" id="PS00747">
    <property type="entry name" value="GLUTR"/>
    <property type="match status" value="1"/>
</dbReference>
<sequence length="418" mass="46294">MTLLALGINHKTAPVSLRERVSFSPDKLDQALDSLLAQPMVQGGVVLSTCNRTELYLSVEERDDLQEALIRWLCDYHNLNEDDLRNSLYWHQDNDAVSHLMRVASGLDSLVLGEPQILGQVKKAFADSQKGHMKASELERMFQKSFSVAKRVRTETDIGASAVSVAFAACTLARQIFESLSTVTVLLVGAGETIELVARHLREHKVQKMIIANRTRERAQILADEVGAEVIALSDIDERLREADIIISSTASPLPIIGKGMVERALKSRRNQPMLLVDIAVPRDVEPEVGKLANAYLYSVDDLQSIISHNLAQRKAAAVEAETIVAQEASEFMAWLRAQSASETIRDYRSQAEQVRDELTAKALAALEQGGDAQTIMQDLAWKLTNRLIHAPTKSLQQAARDGDNERLNILRDSLGLE</sequence>